<organism>
    <name type="scientific">Dothistroma septosporum (strain NZE10 / CBS 128990)</name>
    <name type="common">Red band needle blight fungus</name>
    <name type="synonym">Mycosphaerella pini</name>
    <dbReference type="NCBI Taxonomy" id="675120"/>
    <lineage>
        <taxon>Eukaryota</taxon>
        <taxon>Fungi</taxon>
        <taxon>Dikarya</taxon>
        <taxon>Ascomycota</taxon>
        <taxon>Pezizomycotina</taxon>
        <taxon>Dothideomycetes</taxon>
        <taxon>Dothideomycetidae</taxon>
        <taxon>Mycosphaerellales</taxon>
        <taxon>Mycosphaerellaceae</taxon>
        <taxon>Dothistroma</taxon>
    </lineage>
</organism>
<proteinExistence type="evidence at transcript level"/>
<keyword id="KW-0378">Hydrolase</keyword>
<keyword id="KW-1185">Reference proteome</keyword>
<comment type="function">
    <text evidence="2 3 4 6 9 10 11">Versiconal hemiacetal acetate esterase; part of the fragmented gene cluster that mediates the biosynthesis of dothistromin (DOTH), a polyketide toxin very similar in structure to the aflatoxin precursor, versicolorin B (PubMed:12039746, PubMed:17683963, PubMed:22069571, PubMed:23207690, PubMed:23448391). The first step of the pathway is the conversion of acetate to norsolorinic acid (NOR) and requires the fatty acid synthase subunits hexA and hexB, as well as the polyketide synthase pksA (PubMed:16649078, PubMed:23207690). PksA combines a hexanoyl starter unit and 7 malonyl-CoA extender units to synthesize the precursor NOR (By similarity). The hexanoyl starter unit is provided to the acyl-carrier protein (ACP) domain by the fungal fatty acid synthase hexA/hexB (By similarity). The second step is the conversion of NOR to averantin (AVN) and requires the norsolorinic acid ketoreductase nor1, which catalyzes the dehydration of norsolorinic acid to form (1'S)-averantin (PubMed:23207690). The cytochrome P450 monooxygenase avnA then catalyzes the hydroxylation of AVN to 5'hydroxyaverantin (HAVN) (PubMed:23207690). The next step is performed by adhA that transforms HAVN to averufin (AVF) (PubMed:23207690). Averufin might then be converted to hydroxyversicolorone by cypX and avfA (PubMed:23207690). Hydroxyversicolorone is further converted versiconal hemiacetal acetate (VHA) by moxY (PubMed:23207690). VHA is then the substrate for the versiconal hemiacetal acetate esterase est1 to yield versiconal (VAL) (PubMed:23207690). Versicolorin B synthase vbsA then converts VAL to versicolorin B (VERB) by closing the bisfuran ring (PubMed:16649078, PubMed:23207690). Then, the activity of the versicolorin B desaturase verB leads to versicolorin A (VERA) (PubMed:23207690). DotB, a predicted chloroperoxidase, may perform epoxidation of the A-ring of VERA (PubMed:23207690). Alternatively, a cytochrome P450, such as cypX or avnA could catalyze this step (PubMed:23207690). It is also possible that another, uncharacterized, cytochrome P450 enzyme is responsible for this step (PubMed:23207690). Opening of the epoxide could potentially be achieved by the epoxide hydrolase epoA (PubMed:23207690). However, epoA seems not to be required for DOTH biosynthesis, but other epoxide hydrolases may have the ability to complement this hydrolysis (PubMed:23207690). Alternatively, opening of the epoxide ring could be achieved non-enzymatically (PubMed:23207690). The next step is the deoxygenation of ring A to yield the 5,8-dihydroxyanthraquinone which is most likely catalyzed by the NADPH dehydrogenase encoded by ver1 (PubMed:23207690). The last stages of DOTH biosynthesis are proposed to involve hydroxylation of the bisfuran (PubMed:23207690). OrdB and norB might have oxidative roles here (PubMed:23207690). An alternative possibility is that cytochrome P450 monoogenases such as avnA and cypX might perform these steps in addition to previously proposed steps (PubMed:23207690).</text>
</comment>
<comment type="catalytic activity">
    <reaction evidence="2">
        <text>(2S,3S)-versiconal hemiacetal acetate + H2O = (2S-3S)-versiconal hemiacetal + acetate + H(+)</text>
        <dbReference type="Rhea" id="RHEA:35715"/>
        <dbReference type="ChEBI" id="CHEBI:15377"/>
        <dbReference type="ChEBI" id="CHEBI:15378"/>
        <dbReference type="ChEBI" id="CHEBI:30089"/>
        <dbReference type="ChEBI" id="CHEBI:77950"/>
        <dbReference type="ChEBI" id="CHEBI:77975"/>
        <dbReference type="EC" id="3.1.1.94"/>
    </reaction>
</comment>
<comment type="catalytic activity">
    <reaction evidence="2">
        <text>(3S)-versiconol acetate + H2O = (S)-versiconol + acetate + H(+)</text>
        <dbReference type="Rhea" id="RHEA:35719"/>
        <dbReference type="ChEBI" id="CHEBI:15377"/>
        <dbReference type="ChEBI" id="CHEBI:15378"/>
        <dbReference type="ChEBI" id="CHEBI:30089"/>
        <dbReference type="ChEBI" id="CHEBI:72673"/>
        <dbReference type="ChEBI" id="CHEBI:77947"/>
        <dbReference type="EC" id="3.1.1.94"/>
    </reaction>
</comment>
<comment type="pathway">
    <text evidence="6 10">Mycotoxin biosynthesis.</text>
</comment>
<comment type="induction">
    <text evidence="5">Expression is positively regulated by the dothistromin-specific transcription factor aflR (PubMed:23207690).</text>
</comment>
<comment type="similarity">
    <text evidence="8">Belongs to the 'GDXG' lipolytic enzyme family.</text>
</comment>
<name>EST1_DOTSN</name>
<reference key="1">
    <citation type="journal article" date="2012" name="PLoS Genet.">
        <title>The genomes of the fungal plant pathogens Cladosporium fulvum and Dothistroma septosporum reveal adaptation to different hosts and lifestyles but also signatures of common ancestry.</title>
        <authorList>
            <person name="de Wit P.J.G.M."/>
            <person name="van der Burgt A."/>
            <person name="Oekmen B."/>
            <person name="Stergiopoulos I."/>
            <person name="Abd-Elsalam K.A."/>
            <person name="Aerts A.L."/>
            <person name="Bahkali A.H."/>
            <person name="Beenen H.G."/>
            <person name="Chettri P."/>
            <person name="Cox M.P."/>
            <person name="Datema E."/>
            <person name="de Vries R.P."/>
            <person name="Dhillon B."/>
            <person name="Ganley A.R."/>
            <person name="Griffiths S.A."/>
            <person name="Guo Y."/>
            <person name="Hamelin R.C."/>
            <person name="Henrissat B."/>
            <person name="Kabir M.S."/>
            <person name="Jashni M.K."/>
            <person name="Kema G."/>
            <person name="Klaubauf S."/>
            <person name="Lapidus A."/>
            <person name="Levasseur A."/>
            <person name="Lindquist E."/>
            <person name="Mehrabi R."/>
            <person name="Ohm R.A."/>
            <person name="Owen T.J."/>
            <person name="Salamov A."/>
            <person name="Schwelm A."/>
            <person name="Schijlen E."/>
            <person name="Sun H."/>
            <person name="van den Burg H.A."/>
            <person name="van Ham R.C.H.J."/>
            <person name="Zhang S."/>
            <person name="Goodwin S.B."/>
            <person name="Grigoriev I.V."/>
            <person name="Collemare J."/>
            <person name="Bradshaw R.E."/>
        </authorList>
    </citation>
    <scope>NUCLEOTIDE SEQUENCE [LARGE SCALE GENOMIC DNA]</scope>
    <source>
        <strain>NZE10 / CBS 128990</strain>
    </source>
</reference>
<reference key="2">
    <citation type="journal article" date="2012" name="PLoS Pathog.">
        <title>Diverse lifestyles and strategies of plant pathogenesis encoded in the genomes of eighteen Dothideomycetes fungi.</title>
        <authorList>
            <person name="Ohm R.A."/>
            <person name="Feau N."/>
            <person name="Henrissat B."/>
            <person name="Schoch C.L."/>
            <person name="Horwitz B.A."/>
            <person name="Barry K.W."/>
            <person name="Condon B.J."/>
            <person name="Copeland A.C."/>
            <person name="Dhillon B."/>
            <person name="Glaser F."/>
            <person name="Hesse C.N."/>
            <person name="Kosti I."/>
            <person name="LaButti K."/>
            <person name="Lindquist E.A."/>
            <person name="Lucas S."/>
            <person name="Salamov A.A."/>
            <person name="Bradshaw R.E."/>
            <person name="Ciuffetti L."/>
            <person name="Hamelin R.C."/>
            <person name="Kema G.H.J."/>
            <person name="Lawrence C."/>
            <person name="Scott J.A."/>
            <person name="Spatafora J.W."/>
            <person name="Turgeon B.G."/>
            <person name="de Wit P.J.G.M."/>
            <person name="Zhong S."/>
            <person name="Goodwin S.B."/>
            <person name="Grigoriev I.V."/>
        </authorList>
    </citation>
    <scope>NUCLEOTIDE SEQUENCE [LARGE SCALE GENOMIC DNA]</scope>
    <source>
        <strain>NZE10 / CBS 128990</strain>
    </source>
</reference>
<reference key="3">
    <citation type="journal article" date="2002" name="Appl. Environ. Microbiol.">
        <title>Dothistroma pini, a forest pathogen, contains homologs of aflatoxin biosynthetic pathway genes.</title>
        <authorList>
            <person name="Bradshaw R.E."/>
            <person name="Bhatnagar D."/>
            <person name="Ganley R.J."/>
            <person name="Gillman C.J."/>
            <person name="Monahan B.J."/>
            <person name="Seconi J.M."/>
        </authorList>
    </citation>
    <scope>FUNCTION</scope>
</reference>
<reference key="4">
    <citation type="journal article" date="2006" name="Mycopathologia">
        <title>A polyketide synthase gene required for biosynthesis of the aflatoxin-like toxin, dothistromin.</title>
        <authorList>
            <person name="Bradshaw R.E."/>
            <person name="Jin H."/>
            <person name="Morgan B.S."/>
            <person name="Schwelm A."/>
            <person name="Teddy O.R."/>
            <person name="Young C.A."/>
            <person name="Zhang S."/>
        </authorList>
    </citation>
    <scope>FUNCTION</scope>
</reference>
<reference key="5">
    <citation type="journal article" date="2007" name="Fungal Genet. Biol.">
        <title>A fragmented aflatoxin-like gene cluster in the forest pathogen Dothistroma septosporum.</title>
        <authorList>
            <person name="Zhang S."/>
            <person name="Schwelm A."/>
            <person name="Jin H."/>
            <person name="Collins L.J."/>
            <person name="Bradshaw R.E."/>
        </authorList>
    </citation>
    <scope>FUNCTION</scope>
</reference>
<reference key="6">
    <citation type="journal article" date="2010" name="Toxins">
        <title>Genetics of dothistromin biosynthesis of Dothistroma septosporum: an update.</title>
        <authorList>
            <person name="Schwelm A."/>
            <person name="Bradshaw R.E."/>
        </authorList>
    </citation>
    <scope>REVIEW ON FUNCTION</scope>
    <scope>PATHWAY</scope>
</reference>
<reference key="7">
    <citation type="journal article" date="2013" name="Fungal Genet. Biol.">
        <title>Dothistromin genes at multiple separate loci are regulated by AflR.</title>
        <authorList>
            <person name="Chettri P."/>
            <person name="Ehrlich K.C."/>
            <person name="Cary J.W."/>
            <person name="Collemare J."/>
            <person name="Cox M.P."/>
            <person name="Griffiths S.A."/>
            <person name="Olson M.A."/>
            <person name="de Wit P.J."/>
            <person name="Bradshaw R.E."/>
        </authorList>
    </citation>
    <scope>FUNCTION</scope>
    <scope>INDUCTION</scope>
    <scope>PATHWAY</scope>
</reference>
<reference key="8">
    <citation type="journal article" date="2013" name="New Phytol.">
        <title>Fragmentation of an aflatoxin-like gene cluster in a forest pathogen.</title>
        <authorList>
            <person name="Bradshaw R.E."/>
            <person name="Slot J.C."/>
            <person name="Moore G.G."/>
            <person name="Chettri P."/>
            <person name="de Wit P.J."/>
            <person name="Ehrlich K.C."/>
            <person name="Ganley A.R."/>
            <person name="Olson M.A."/>
            <person name="Rokas A."/>
            <person name="Carbone I."/>
            <person name="Cox M.P."/>
        </authorList>
    </citation>
    <scope>FUNCTION</scope>
</reference>
<gene>
    <name evidence="7" type="primary">Est1</name>
    <name type="ORF">DOTSEDRAFT_75609</name>
</gene>
<sequence>MPGQYAQSWLDWEAQSGGRSVLHGTPDEIKAMYAGLSQALKPMAPPFSENVDVTEGDVDGIKYRIYKLKGERGPLPIAFNTHGGGWMVGDLDTDHLLCGVIAEHTKSVVVNVDYRLTPDVAYPVPLEDSLKVYKWAAANASSFGGDPDKFYTIGGSAGGALALQIANKIKKDPQLKDGLKGVVALVPATTHWEAVPEKYKSKYKAVEDNKTGVPIIDGESMEIFFKYAKVDPSDPDTFTLLAEDNHKNFPPTYFASCEFDPLRDDAYVMEAALKEAGVPTKHDHYPGMPHYFWLIPTVPESKIFVENLLQGIGWILSQMKGATRSSYI</sequence>
<accession>M2YJ38</accession>
<dbReference type="EC" id="3.1.1.94" evidence="2"/>
<dbReference type="EMBL" id="KB446546">
    <property type="protein sequence ID" value="EME38960.1"/>
    <property type="molecule type" value="Genomic_DNA"/>
</dbReference>
<dbReference type="SMR" id="M2YJ38"/>
<dbReference type="STRING" id="675120.M2YJ38"/>
<dbReference type="ESTHER" id="dotsn-est1">
    <property type="family name" value="Hormone-sensitive_lipase_like"/>
</dbReference>
<dbReference type="EnsemblFungi" id="EME38960">
    <property type="protein sequence ID" value="EME38960"/>
    <property type="gene ID" value="DOTSEDRAFT_75609"/>
</dbReference>
<dbReference type="eggNOG" id="KOG1515">
    <property type="taxonomic scope" value="Eukaryota"/>
</dbReference>
<dbReference type="HOGENOM" id="CLU_012494_6_3_1"/>
<dbReference type="OMA" id="HCFWIVP"/>
<dbReference type="OrthoDB" id="408631at2759"/>
<dbReference type="Proteomes" id="UP000016933">
    <property type="component" value="Unassembled WGS sequence"/>
</dbReference>
<dbReference type="GO" id="GO:0140397">
    <property type="term" value="F:versiconal hemiacetal acetate esterase activity"/>
    <property type="evidence" value="ECO:0007669"/>
    <property type="project" value="UniProtKB-EC"/>
</dbReference>
<dbReference type="Gene3D" id="3.40.50.1820">
    <property type="entry name" value="alpha/beta hydrolase"/>
    <property type="match status" value="1"/>
</dbReference>
<dbReference type="InterPro" id="IPR013094">
    <property type="entry name" value="AB_hydrolase_3"/>
</dbReference>
<dbReference type="InterPro" id="IPR029058">
    <property type="entry name" value="AB_hydrolase_fold"/>
</dbReference>
<dbReference type="InterPro" id="IPR050300">
    <property type="entry name" value="GDXG_lipolytic_enzyme"/>
</dbReference>
<dbReference type="PANTHER" id="PTHR48081">
    <property type="entry name" value="AB HYDROLASE SUPERFAMILY PROTEIN C4A8.06C"/>
    <property type="match status" value="1"/>
</dbReference>
<dbReference type="PANTHER" id="PTHR48081:SF8">
    <property type="entry name" value="ALPHA_BETA HYDROLASE FOLD-3 DOMAIN-CONTAINING PROTEIN-RELATED"/>
    <property type="match status" value="1"/>
</dbReference>
<dbReference type="Pfam" id="PF07859">
    <property type="entry name" value="Abhydrolase_3"/>
    <property type="match status" value="1"/>
</dbReference>
<dbReference type="SUPFAM" id="SSF53474">
    <property type="entry name" value="alpha/beta-Hydrolases"/>
    <property type="match status" value="1"/>
</dbReference>
<evidence type="ECO:0000250" key="1">
    <source>
        <dbReference type="UniProtKB" id="Q5NUF3"/>
    </source>
</evidence>
<evidence type="ECO:0000250" key="2">
    <source>
        <dbReference type="UniProtKB" id="Q6UEG5"/>
    </source>
</evidence>
<evidence type="ECO:0000269" key="3">
    <source>
    </source>
</evidence>
<evidence type="ECO:0000269" key="4">
    <source>
    </source>
</evidence>
<evidence type="ECO:0000269" key="5">
    <source>
    </source>
</evidence>
<evidence type="ECO:0000303" key="6">
    <source>
    </source>
</evidence>
<evidence type="ECO:0000303" key="7">
    <source>
    </source>
</evidence>
<evidence type="ECO:0000305" key="8"/>
<evidence type="ECO:0000305" key="9">
    <source>
    </source>
</evidence>
<evidence type="ECO:0000305" key="10">
    <source>
    </source>
</evidence>
<evidence type="ECO:0000305" key="11">
    <source>
    </source>
</evidence>
<feature type="chain" id="PRO_0000443476" description="Versiconal hemiacetal acetate esterase">
    <location>
        <begin position="1"/>
        <end position="328"/>
    </location>
</feature>
<feature type="short sequence motif" description="Involved in the stabilization of the negatively charged intermediate by the formation of the oxyanion hole" evidence="1">
    <location>
        <begin position="82"/>
        <end position="84"/>
    </location>
</feature>
<feature type="active site" evidence="1">
    <location>
        <position position="156"/>
    </location>
</feature>
<feature type="active site" evidence="1">
    <location>
        <position position="260"/>
    </location>
</feature>
<feature type="active site" evidence="1">
    <location>
        <position position="290"/>
    </location>
</feature>
<protein>
    <recommendedName>
        <fullName evidence="2">Versiconal hemiacetal acetate esterase</fullName>
        <ecNumber evidence="2">3.1.1.94</ecNumber>
    </recommendedName>
    <alternativeName>
        <fullName evidence="7">Dothistromin biosynthesis protein est1</fullName>
    </alternativeName>
    <alternativeName>
        <fullName evidence="7">Esterase 1</fullName>
    </alternativeName>
</protein>